<sequence length="262" mass="29658">MSVVSMKQLLEAGVHFGHQTRRWNPKMEEYIFTERNGIYIIDLQKTVKLIDTAYNYMKDVAANDGVALFVGTKKQAQDAIEEEATRAGQYYVNHRWLGGTLTNWKTIQSRIARLKELKKMSEDGTFDVLPKKEVAVLTKQREKLERFLGGIEDMPRIPDVMFIVDPHKEQIAVKEAQKLHIPIVAMVDTNTDPDDIDYVIPSNDDAIRAVRLITSKMADAFVEGKQGQDDAQQETADDNAANETVSEDSLKNLKNSVEGKED</sequence>
<comment type="similarity">
    <text evidence="1">Belongs to the universal ribosomal protein uS2 family.</text>
</comment>
<dbReference type="EMBL" id="AP007281">
    <property type="protein sequence ID" value="BAG25173.1"/>
    <property type="molecule type" value="Genomic_DNA"/>
</dbReference>
<dbReference type="RefSeq" id="WP_003666860.1">
    <property type="nucleotide sequence ID" value="NC_010609.1"/>
</dbReference>
<dbReference type="SMR" id="B2G6U1"/>
<dbReference type="GeneID" id="77190769"/>
<dbReference type="KEGG" id="lrf:LAR_0657"/>
<dbReference type="HOGENOM" id="CLU_040318_1_2_9"/>
<dbReference type="GO" id="GO:0022627">
    <property type="term" value="C:cytosolic small ribosomal subunit"/>
    <property type="evidence" value="ECO:0007669"/>
    <property type="project" value="TreeGrafter"/>
</dbReference>
<dbReference type="GO" id="GO:0003735">
    <property type="term" value="F:structural constituent of ribosome"/>
    <property type="evidence" value="ECO:0007669"/>
    <property type="project" value="InterPro"/>
</dbReference>
<dbReference type="GO" id="GO:0006412">
    <property type="term" value="P:translation"/>
    <property type="evidence" value="ECO:0007669"/>
    <property type="project" value="UniProtKB-UniRule"/>
</dbReference>
<dbReference type="CDD" id="cd01425">
    <property type="entry name" value="RPS2"/>
    <property type="match status" value="1"/>
</dbReference>
<dbReference type="FunFam" id="1.10.287.610:FF:000001">
    <property type="entry name" value="30S ribosomal protein S2"/>
    <property type="match status" value="1"/>
</dbReference>
<dbReference type="Gene3D" id="3.40.50.10490">
    <property type="entry name" value="Glucose-6-phosphate isomerase like protein, domain 1"/>
    <property type="match status" value="1"/>
</dbReference>
<dbReference type="Gene3D" id="1.10.287.610">
    <property type="entry name" value="Helix hairpin bin"/>
    <property type="match status" value="1"/>
</dbReference>
<dbReference type="HAMAP" id="MF_00291_B">
    <property type="entry name" value="Ribosomal_uS2_B"/>
    <property type="match status" value="1"/>
</dbReference>
<dbReference type="InterPro" id="IPR001865">
    <property type="entry name" value="Ribosomal_uS2"/>
</dbReference>
<dbReference type="InterPro" id="IPR005706">
    <property type="entry name" value="Ribosomal_uS2_bac/mit/plastid"/>
</dbReference>
<dbReference type="InterPro" id="IPR018130">
    <property type="entry name" value="Ribosomal_uS2_CS"/>
</dbReference>
<dbReference type="InterPro" id="IPR023591">
    <property type="entry name" value="Ribosomal_uS2_flav_dom_sf"/>
</dbReference>
<dbReference type="NCBIfam" id="TIGR01011">
    <property type="entry name" value="rpsB_bact"/>
    <property type="match status" value="1"/>
</dbReference>
<dbReference type="PANTHER" id="PTHR12534">
    <property type="entry name" value="30S RIBOSOMAL PROTEIN S2 PROKARYOTIC AND ORGANELLAR"/>
    <property type="match status" value="1"/>
</dbReference>
<dbReference type="PANTHER" id="PTHR12534:SF0">
    <property type="entry name" value="SMALL RIBOSOMAL SUBUNIT PROTEIN US2M"/>
    <property type="match status" value="1"/>
</dbReference>
<dbReference type="Pfam" id="PF00318">
    <property type="entry name" value="Ribosomal_S2"/>
    <property type="match status" value="1"/>
</dbReference>
<dbReference type="PRINTS" id="PR00395">
    <property type="entry name" value="RIBOSOMALS2"/>
</dbReference>
<dbReference type="SUPFAM" id="SSF52313">
    <property type="entry name" value="Ribosomal protein S2"/>
    <property type="match status" value="1"/>
</dbReference>
<dbReference type="PROSITE" id="PS00962">
    <property type="entry name" value="RIBOSOMAL_S2_1"/>
    <property type="match status" value="1"/>
</dbReference>
<dbReference type="PROSITE" id="PS00963">
    <property type="entry name" value="RIBOSOMAL_S2_2"/>
    <property type="match status" value="1"/>
</dbReference>
<gene>
    <name evidence="1" type="primary">rpsB</name>
    <name type="ordered locus">LAR_0657</name>
</gene>
<evidence type="ECO:0000255" key="1">
    <source>
        <dbReference type="HAMAP-Rule" id="MF_00291"/>
    </source>
</evidence>
<evidence type="ECO:0000256" key="2">
    <source>
        <dbReference type="SAM" id="MobiDB-lite"/>
    </source>
</evidence>
<evidence type="ECO:0000305" key="3"/>
<feature type="chain" id="PRO_1000115032" description="Small ribosomal subunit protein uS2">
    <location>
        <begin position="1"/>
        <end position="262"/>
    </location>
</feature>
<feature type="region of interest" description="Disordered" evidence="2">
    <location>
        <begin position="224"/>
        <end position="262"/>
    </location>
</feature>
<protein>
    <recommendedName>
        <fullName evidence="1">Small ribosomal subunit protein uS2</fullName>
    </recommendedName>
    <alternativeName>
        <fullName evidence="3">30S ribosomal protein S2</fullName>
    </alternativeName>
</protein>
<keyword id="KW-0687">Ribonucleoprotein</keyword>
<keyword id="KW-0689">Ribosomal protein</keyword>
<organism>
    <name type="scientific">Limosilactobacillus reuteri subsp. reuteri (strain JCM 1112)</name>
    <name type="common">Lactobacillus reuteri</name>
    <dbReference type="NCBI Taxonomy" id="557433"/>
    <lineage>
        <taxon>Bacteria</taxon>
        <taxon>Bacillati</taxon>
        <taxon>Bacillota</taxon>
        <taxon>Bacilli</taxon>
        <taxon>Lactobacillales</taxon>
        <taxon>Lactobacillaceae</taxon>
        <taxon>Limosilactobacillus</taxon>
    </lineage>
</organism>
<reference key="1">
    <citation type="journal article" date="2008" name="DNA Res.">
        <title>Comparative genome analysis of Lactobacillus reuteri and Lactobacillus fermentum reveal a genomic island for reuterin and cobalamin production.</title>
        <authorList>
            <person name="Morita H."/>
            <person name="Toh H."/>
            <person name="Fukuda S."/>
            <person name="Horikawa H."/>
            <person name="Oshima K."/>
            <person name="Suzuki T."/>
            <person name="Murakami M."/>
            <person name="Hisamatsu S."/>
            <person name="Kato Y."/>
            <person name="Takizawa T."/>
            <person name="Fukuoka H."/>
            <person name="Yoshimura T."/>
            <person name="Itoh K."/>
            <person name="O'Sullivan D.J."/>
            <person name="McKay L.L."/>
            <person name="Ohno H."/>
            <person name="Kikuchi J."/>
            <person name="Masaoka T."/>
            <person name="Hattori M."/>
        </authorList>
    </citation>
    <scope>NUCLEOTIDE SEQUENCE [LARGE SCALE GENOMIC DNA]</scope>
    <source>
        <strain>JCM 1112</strain>
    </source>
</reference>
<name>RS2_LIMRJ</name>
<accession>B2G6U1</accession>
<proteinExistence type="inferred from homology"/>